<dbReference type="EMBL" id="CP001114">
    <property type="protein sequence ID" value="ACO45449.1"/>
    <property type="molecule type" value="Genomic_DNA"/>
</dbReference>
<dbReference type="RefSeq" id="WP_012692572.1">
    <property type="nucleotide sequence ID" value="NC_012526.1"/>
</dbReference>
<dbReference type="SMR" id="C1D0S5"/>
<dbReference type="STRING" id="546414.Deide_06070"/>
<dbReference type="PaxDb" id="546414-Deide_06070"/>
<dbReference type="KEGG" id="ddr:Deide_06070"/>
<dbReference type="eggNOG" id="COG0081">
    <property type="taxonomic scope" value="Bacteria"/>
</dbReference>
<dbReference type="HOGENOM" id="CLU_062853_0_0_0"/>
<dbReference type="OrthoDB" id="9803740at2"/>
<dbReference type="Proteomes" id="UP000002208">
    <property type="component" value="Chromosome"/>
</dbReference>
<dbReference type="GO" id="GO:0015934">
    <property type="term" value="C:large ribosomal subunit"/>
    <property type="evidence" value="ECO:0007669"/>
    <property type="project" value="InterPro"/>
</dbReference>
<dbReference type="GO" id="GO:0019843">
    <property type="term" value="F:rRNA binding"/>
    <property type="evidence" value="ECO:0007669"/>
    <property type="project" value="UniProtKB-UniRule"/>
</dbReference>
<dbReference type="GO" id="GO:0003735">
    <property type="term" value="F:structural constituent of ribosome"/>
    <property type="evidence" value="ECO:0007669"/>
    <property type="project" value="InterPro"/>
</dbReference>
<dbReference type="GO" id="GO:0000049">
    <property type="term" value="F:tRNA binding"/>
    <property type="evidence" value="ECO:0007669"/>
    <property type="project" value="UniProtKB-KW"/>
</dbReference>
<dbReference type="GO" id="GO:0006417">
    <property type="term" value="P:regulation of translation"/>
    <property type="evidence" value="ECO:0007669"/>
    <property type="project" value="UniProtKB-KW"/>
</dbReference>
<dbReference type="GO" id="GO:0006412">
    <property type="term" value="P:translation"/>
    <property type="evidence" value="ECO:0007669"/>
    <property type="project" value="UniProtKB-UniRule"/>
</dbReference>
<dbReference type="CDD" id="cd00403">
    <property type="entry name" value="Ribosomal_L1"/>
    <property type="match status" value="1"/>
</dbReference>
<dbReference type="FunFam" id="3.40.50.790:FF:000001">
    <property type="entry name" value="50S ribosomal protein L1"/>
    <property type="match status" value="1"/>
</dbReference>
<dbReference type="Gene3D" id="3.30.190.20">
    <property type="match status" value="1"/>
</dbReference>
<dbReference type="Gene3D" id="3.40.50.790">
    <property type="match status" value="1"/>
</dbReference>
<dbReference type="HAMAP" id="MF_01318_B">
    <property type="entry name" value="Ribosomal_uL1_B"/>
    <property type="match status" value="1"/>
</dbReference>
<dbReference type="InterPro" id="IPR005878">
    <property type="entry name" value="Ribosom_uL1_bac-type"/>
</dbReference>
<dbReference type="InterPro" id="IPR002143">
    <property type="entry name" value="Ribosomal_uL1"/>
</dbReference>
<dbReference type="InterPro" id="IPR023674">
    <property type="entry name" value="Ribosomal_uL1-like"/>
</dbReference>
<dbReference type="InterPro" id="IPR028364">
    <property type="entry name" value="Ribosomal_uL1/biogenesis"/>
</dbReference>
<dbReference type="InterPro" id="IPR016095">
    <property type="entry name" value="Ribosomal_uL1_3-a/b-sand"/>
</dbReference>
<dbReference type="InterPro" id="IPR023673">
    <property type="entry name" value="Ribosomal_uL1_CS"/>
</dbReference>
<dbReference type="NCBIfam" id="TIGR01169">
    <property type="entry name" value="rplA_bact"/>
    <property type="match status" value="1"/>
</dbReference>
<dbReference type="PANTHER" id="PTHR36427">
    <property type="entry name" value="54S RIBOSOMAL PROTEIN L1, MITOCHONDRIAL"/>
    <property type="match status" value="1"/>
</dbReference>
<dbReference type="PANTHER" id="PTHR36427:SF3">
    <property type="entry name" value="LARGE RIBOSOMAL SUBUNIT PROTEIN UL1M"/>
    <property type="match status" value="1"/>
</dbReference>
<dbReference type="Pfam" id="PF00687">
    <property type="entry name" value="Ribosomal_L1"/>
    <property type="match status" value="1"/>
</dbReference>
<dbReference type="PIRSF" id="PIRSF002155">
    <property type="entry name" value="Ribosomal_L1"/>
    <property type="match status" value="1"/>
</dbReference>
<dbReference type="SUPFAM" id="SSF56808">
    <property type="entry name" value="Ribosomal protein L1"/>
    <property type="match status" value="1"/>
</dbReference>
<dbReference type="PROSITE" id="PS01199">
    <property type="entry name" value="RIBOSOMAL_L1"/>
    <property type="match status" value="1"/>
</dbReference>
<gene>
    <name evidence="1" type="primary">rplA</name>
    <name type="ordered locus">Deide_06070</name>
</gene>
<protein>
    <recommendedName>
        <fullName evidence="1">Large ribosomal subunit protein uL1</fullName>
    </recommendedName>
    <alternativeName>
        <fullName evidence="2">50S ribosomal protein L1</fullName>
    </alternativeName>
</protein>
<organism>
    <name type="scientific">Deinococcus deserti (strain DSM 17065 / CIP 109153 / LMG 22923 / VCD115)</name>
    <dbReference type="NCBI Taxonomy" id="546414"/>
    <lineage>
        <taxon>Bacteria</taxon>
        <taxon>Thermotogati</taxon>
        <taxon>Deinococcota</taxon>
        <taxon>Deinococci</taxon>
        <taxon>Deinococcales</taxon>
        <taxon>Deinococcaceae</taxon>
        <taxon>Deinococcus</taxon>
    </lineage>
</organism>
<comment type="function">
    <text evidence="1">Binds directly to 23S rRNA. The L1 stalk is quite mobile in the ribosome, and is involved in E site tRNA release.</text>
</comment>
<comment type="function">
    <text evidence="1">Protein L1 is also a translational repressor protein, it controls the translation of the L11 operon by binding to its mRNA.</text>
</comment>
<comment type="subunit">
    <text evidence="1">Part of the 50S ribosomal subunit.</text>
</comment>
<comment type="similarity">
    <text evidence="1">Belongs to the universal ribosomal protein uL1 family.</text>
</comment>
<accession>C1D0S5</accession>
<reference key="1">
    <citation type="journal article" date="2009" name="PLoS Genet.">
        <title>Alliance of proteomics and genomics to unravel the specificities of Sahara bacterium Deinococcus deserti.</title>
        <authorList>
            <person name="de Groot A."/>
            <person name="Dulermo R."/>
            <person name="Ortet P."/>
            <person name="Blanchard L."/>
            <person name="Guerin P."/>
            <person name="Fernandez B."/>
            <person name="Vacherie B."/>
            <person name="Dossat C."/>
            <person name="Jolivet E."/>
            <person name="Siguier P."/>
            <person name="Chandler M."/>
            <person name="Barakat M."/>
            <person name="Dedieu A."/>
            <person name="Barbe V."/>
            <person name="Heulin T."/>
            <person name="Sommer S."/>
            <person name="Achouak W."/>
            <person name="Armengaud J."/>
        </authorList>
    </citation>
    <scope>NUCLEOTIDE SEQUENCE [LARGE SCALE GENOMIC DNA]</scope>
    <source>
        <strain>DSM 17065 / CIP 109153 / LMG 22923 / VCD115</strain>
    </source>
</reference>
<name>RL1_DEIDV</name>
<sequence>MPKHGKRYRALIEKVDRNKQYTIDEAAALVKELATAKFDETVEVHFRLGIDPRKSDQNVRGTVALPHGTGRTVRVAVITKGENVAAAEAAGADVVGSDELIERIAGGFMEFDAVVATPDMMAAVGQKLARLLGPRGLLPNPKSGTVGPDVTGMVRGLKAGRIEFRNDKTGVVHAPIGKASFDPSNLSANYGALISALEAAKPGTAKGVFLRSAYMTTTMGPSIPLTLSGGAQA</sequence>
<keyword id="KW-1185">Reference proteome</keyword>
<keyword id="KW-0678">Repressor</keyword>
<keyword id="KW-0687">Ribonucleoprotein</keyword>
<keyword id="KW-0689">Ribosomal protein</keyword>
<keyword id="KW-0694">RNA-binding</keyword>
<keyword id="KW-0699">rRNA-binding</keyword>
<keyword id="KW-0810">Translation regulation</keyword>
<keyword id="KW-0820">tRNA-binding</keyword>
<evidence type="ECO:0000255" key="1">
    <source>
        <dbReference type="HAMAP-Rule" id="MF_01318"/>
    </source>
</evidence>
<evidence type="ECO:0000305" key="2"/>
<proteinExistence type="inferred from homology"/>
<feature type="chain" id="PRO_1000214415" description="Large ribosomal subunit protein uL1">
    <location>
        <begin position="1"/>
        <end position="233"/>
    </location>
</feature>